<name>RL7A_SACI1</name>
<accession>C3NMR6</accession>
<organism>
    <name type="scientific">Saccharolobus islandicus (strain Y.N.15.51 / Yellowstone #2)</name>
    <name type="common">Sulfolobus islandicus</name>
    <dbReference type="NCBI Taxonomy" id="419942"/>
    <lineage>
        <taxon>Archaea</taxon>
        <taxon>Thermoproteota</taxon>
        <taxon>Thermoprotei</taxon>
        <taxon>Sulfolobales</taxon>
        <taxon>Sulfolobaceae</taxon>
        <taxon>Saccharolobus</taxon>
    </lineage>
</organism>
<protein>
    <recommendedName>
        <fullName evidence="1">Large ribosomal subunit protein eL8</fullName>
    </recommendedName>
    <alternativeName>
        <fullName evidence="2">50S ribosomal protein L7Ae</fullName>
    </alternativeName>
    <alternativeName>
        <fullName evidence="1">Ribosomal protein L8e</fullName>
    </alternativeName>
</protein>
<feature type="chain" id="PRO_1000205163" description="Large ribosomal subunit protein eL8">
    <location>
        <begin position="1"/>
        <end position="127"/>
    </location>
</feature>
<sequence>MSKASYVKFEVPQDLADKVLEAVRKAKESGKIKKGTNETTKAVERGQAKLVVIAEDVQPEEIVAHLPLLCDEKKIPYVYVSSKKALGEACGLQVATASAAILEPGEAKDLVDEIVKRVNEIKGKTSS</sequence>
<evidence type="ECO:0000255" key="1">
    <source>
        <dbReference type="HAMAP-Rule" id="MF_00326"/>
    </source>
</evidence>
<evidence type="ECO:0000305" key="2"/>
<proteinExistence type="inferred from homology"/>
<reference key="1">
    <citation type="journal article" date="2009" name="Proc. Natl. Acad. Sci. U.S.A.">
        <title>Biogeography of the Sulfolobus islandicus pan-genome.</title>
        <authorList>
            <person name="Reno M.L."/>
            <person name="Held N.L."/>
            <person name="Fields C.J."/>
            <person name="Burke P.V."/>
            <person name="Whitaker R.J."/>
        </authorList>
    </citation>
    <scope>NUCLEOTIDE SEQUENCE [LARGE SCALE GENOMIC DNA]</scope>
    <source>
        <strain>Y.N.15.51 / Yellowstone #2</strain>
    </source>
</reference>
<keyword id="KW-0963">Cytoplasm</keyword>
<keyword id="KW-0687">Ribonucleoprotein</keyword>
<keyword id="KW-0689">Ribosomal protein</keyword>
<keyword id="KW-0694">RNA-binding</keyword>
<keyword id="KW-0699">rRNA-binding</keyword>
<keyword id="KW-0819">tRNA processing</keyword>
<gene>
    <name evidence="1" type="primary">rpl7ae</name>
    <name type="ordered locus">YN1551_0761</name>
</gene>
<dbReference type="EMBL" id="CP001404">
    <property type="protein sequence ID" value="ACP47886.1"/>
    <property type="molecule type" value="Genomic_DNA"/>
</dbReference>
<dbReference type="RefSeq" id="WP_012711999.1">
    <property type="nucleotide sequence ID" value="NC_012623.1"/>
</dbReference>
<dbReference type="SMR" id="C3NMR6"/>
<dbReference type="GeneID" id="84062343"/>
<dbReference type="KEGG" id="sin:YN1551_0761"/>
<dbReference type="HOGENOM" id="CLU_084513_4_0_2"/>
<dbReference type="Proteomes" id="UP000006818">
    <property type="component" value="Chromosome"/>
</dbReference>
<dbReference type="GO" id="GO:0005737">
    <property type="term" value="C:cytoplasm"/>
    <property type="evidence" value="ECO:0007669"/>
    <property type="project" value="UniProtKB-SubCell"/>
</dbReference>
<dbReference type="GO" id="GO:1990904">
    <property type="term" value="C:ribonucleoprotein complex"/>
    <property type="evidence" value="ECO:0007669"/>
    <property type="project" value="UniProtKB-KW"/>
</dbReference>
<dbReference type="GO" id="GO:0005840">
    <property type="term" value="C:ribosome"/>
    <property type="evidence" value="ECO:0007669"/>
    <property type="project" value="UniProtKB-KW"/>
</dbReference>
<dbReference type="GO" id="GO:0004526">
    <property type="term" value="F:ribonuclease P activity"/>
    <property type="evidence" value="ECO:0007669"/>
    <property type="project" value="UniProtKB-UniRule"/>
</dbReference>
<dbReference type="GO" id="GO:0019843">
    <property type="term" value="F:rRNA binding"/>
    <property type="evidence" value="ECO:0007669"/>
    <property type="project" value="UniProtKB-KW"/>
</dbReference>
<dbReference type="GO" id="GO:0003735">
    <property type="term" value="F:structural constituent of ribosome"/>
    <property type="evidence" value="ECO:0007669"/>
    <property type="project" value="InterPro"/>
</dbReference>
<dbReference type="GO" id="GO:0042254">
    <property type="term" value="P:ribosome biogenesis"/>
    <property type="evidence" value="ECO:0007669"/>
    <property type="project" value="InterPro"/>
</dbReference>
<dbReference type="GO" id="GO:0006412">
    <property type="term" value="P:translation"/>
    <property type="evidence" value="ECO:0007669"/>
    <property type="project" value="UniProtKB-UniRule"/>
</dbReference>
<dbReference type="GO" id="GO:0001682">
    <property type="term" value="P:tRNA 5'-leader removal"/>
    <property type="evidence" value="ECO:0007669"/>
    <property type="project" value="UniProtKB-UniRule"/>
</dbReference>
<dbReference type="FunFam" id="3.30.1330.30:FF:000020">
    <property type="entry name" value="50S ribosomal protein L7Ae"/>
    <property type="match status" value="1"/>
</dbReference>
<dbReference type="Gene3D" id="3.30.1330.30">
    <property type="match status" value="1"/>
</dbReference>
<dbReference type="HAMAP" id="MF_00326">
    <property type="entry name" value="Ribosomal_eL8"/>
    <property type="match status" value="1"/>
</dbReference>
<dbReference type="InterPro" id="IPR050257">
    <property type="entry name" value="eL8/uL1-like"/>
</dbReference>
<dbReference type="InterPro" id="IPR029064">
    <property type="entry name" value="Ribosomal_eL30-like_sf"/>
</dbReference>
<dbReference type="InterPro" id="IPR004037">
    <property type="entry name" value="Ribosomal_eL8-like_CS"/>
</dbReference>
<dbReference type="InterPro" id="IPR004038">
    <property type="entry name" value="Ribosomal_eL8/eL30/eS12/Gad45"/>
</dbReference>
<dbReference type="InterPro" id="IPR018492">
    <property type="entry name" value="Ribosomal_eL8/Nhp2"/>
</dbReference>
<dbReference type="InterPro" id="IPR022481">
    <property type="entry name" value="Ribosomal_eL8_arc"/>
</dbReference>
<dbReference type="NCBIfam" id="TIGR03677">
    <property type="entry name" value="eL8_ribo"/>
    <property type="match status" value="1"/>
</dbReference>
<dbReference type="PANTHER" id="PTHR23105">
    <property type="entry name" value="RIBOSOMAL PROTEIN L7AE FAMILY MEMBER"/>
    <property type="match status" value="1"/>
</dbReference>
<dbReference type="Pfam" id="PF01248">
    <property type="entry name" value="Ribosomal_L7Ae"/>
    <property type="match status" value="1"/>
</dbReference>
<dbReference type="PRINTS" id="PR00881">
    <property type="entry name" value="L7ARS6FAMILY"/>
</dbReference>
<dbReference type="PRINTS" id="PR00884">
    <property type="entry name" value="RIBOSOMALHS6"/>
</dbReference>
<dbReference type="SUPFAM" id="SSF55315">
    <property type="entry name" value="L30e-like"/>
    <property type="match status" value="1"/>
</dbReference>
<dbReference type="PROSITE" id="PS01082">
    <property type="entry name" value="RIBOSOMAL_L7AE"/>
    <property type="match status" value="1"/>
</dbReference>
<comment type="function">
    <text evidence="1">Multifunctional RNA-binding protein that recognizes the K-turn motif in ribosomal RNA, the RNA component of RNase P, box H/ACA, box C/D and box C'/D' sRNAs.</text>
</comment>
<comment type="subunit">
    <text evidence="1">Part of the 50S ribosomal subunit. Probably part of the RNase P complex.</text>
</comment>
<comment type="subcellular location">
    <subcellularLocation>
        <location evidence="1">Cytoplasm</location>
    </subcellularLocation>
</comment>
<comment type="similarity">
    <text evidence="1">Belongs to the eukaryotic ribosomal protein eL8 family.</text>
</comment>